<organism>
    <name type="scientific">Helicobacter acinonychis (strain Sheeba)</name>
    <dbReference type="NCBI Taxonomy" id="382638"/>
    <lineage>
        <taxon>Bacteria</taxon>
        <taxon>Pseudomonadati</taxon>
        <taxon>Campylobacterota</taxon>
        <taxon>Epsilonproteobacteria</taxon>
        <taxon>Campylobacterales</taxon>
        <taxon>Helicobacteraceae</taxon>
        <taxon>Helicobacter</taxon>
    </lineage>
</organism>
<sequence length="492" mass="54945">MAQKTLLIITDGIGYRKDSDYNAFFHAKKPTYDLMFKTLPYSLIDTHGLSVGLPKGQMGNSEVGHMCIGAGRVLYQDLVKISLSLQNDGLKNNTAFLSAIQKSSVVHLMGLMSDGGVHSHIEHFIALALECEKFHKKVYLHLITDGRDVAPKSALTYLEIMQNICNESIQIATMSGRFYAMDRDNRFERIKLAYNSLMGLTDPTPLSPSEYIQSQYDKNITDEFIMPTCFKNYCGMQDDESFIFINFRNDRAREITSALGQKEFNGFKRQVFKKLHIATMTPYDKNFPYPILFPKESIQNTLAEVVSECNLTQSHIAETEKYAHVTFFINGGVETPFKNENRVLIQSPKVTTYDLKPEMSAKEVTLAVLEQMRLGTDLIIVNFANGDMVGHTGNFEASVKAVEAVDTSLGEILSLAKELNYAMLLTSDHGNCEHMKDENQNPLTNHTAGSVYCFVLGNGIKSIKNGALNNIASSVLKLMGIKAPATMDEPLF</sequence>
<keyword id="KW-0324">Glycolysis</keyword>
<keyword id="KW-0413">Isomerase</keyword>
<keyword id="KW-0464">Manganese</keyword>
<keyword id="KW-0479">Metal-binding</keyword>
<accession>Q17X03</accession>
<reference key="1">
    <citation type="journal article" date="2006" name="PLoS Genet.">
        <title>Who ate whom? Adaptive Helicobacter genomic changes that accompanied a host jump from early humans to large felines.</title>
        <authorList>
            <person name="Eppinger M."/>
            <person name="Baar C."/>
            <person name="Linz B."/>
            <person name="Raddatz G."/>
            <person name="Lanz C."/>
            <person name="Keller H."/>
            <person name="Morelli G."/>
            <person name="Gressmann H."/>
            <person name="Achtman M."/>
            <person name="Schuster S.C."/>
        </authorList>
    </citation>
    <scope>NUCLEOTIDE SEQUENCE [LARGE SCALE GENOMIC DNA]</scope>
    <source>
        <strain>Sheeba</strain>
    </source>
</reference>
<evidence type="ECO:0000255" key="1">
    <source>
        <dbReference type="HAMAP-Rule" id="MF_01038"/>
    </source>
</evidence>
<name>GPMI_HELAH</name>
<proteinExistence type="inferred from homology"/>
<dbReference type="EC" id="5.4.2.12" evidence="1"/>
<dbReference type="EMBL" id="AM260522">
    <property type="protein sequence ID" value="CAJ99823.1"/>
    <property type="molecule type" value="Genomic_DNA"/>
</dbReference>
<dbReference type="RefSeq" id="WP_011577933.1">
    <property type="nucleotide sequence ID" value="NC_008229.1"/>
</dbReference>
<dbReference type="SMR" id="Q17X03"/>
<dbReference type="STRING" id="382638.Hac_1059"/>
<dbReference type="GeneID" id="31758420"/>
<dbReference type="KEGG" id="hac:Hac_1059"/>
<dbReference type="eggNOG" id="COG0696">
    <property type="taxonomic scope" value="Bacteria"/>
</dbReference>
<dbReference type="HOGENOM" id="CLU_026099_2_0_7"/>
<dbReference type="OrthoDB" id="9800863at2"/>
<dbReference type="BioCyc" id="HACI382638:HAC_RS04525-MONOMER"/>
<dbReference type="UniPathway" id="UPA00109">
    <property type="reaction ID" value="UER00186"/>
</dbReference>
<dbReference type="Proteomes" id="UP000000775">
    <property type="component" value="Chromosome"/>
</dbReference>
<dbReference type="GO" id="GO:0005829">
    <property type="term" value="C:cytosol"/>
    <property type="evidence" value="ECO:0007669"/>
    <property type="project" value="TreeGrafter"/>
</dbReference>
<dbReference type="GO" id="GO:0030145">
    <property type="term" value="F:manganese ion binding"/>
    <property type="evidence" value="ECO:0007669"/>
    <property type="project" value="UniProtKB-UniRule"/>
</dbReference>
<dbReference type="GO" id="GO:0004619">
    <property type="term" value="F:phosphoglycerate mutase activity"/>
    <property type="evidence" value="ECO:0007669"/>
    <property type="project" value="UniProtKB-EC"/>
</dbReference>
<dbReference type="GO" id="GO:0006007">
    <property type="term" value="P:glucose catabolic process"/>
    <property type="evidence" value="ECO:0007669"/>
    <property type="project" value="InterPro"/>
</dbReference>
<dbReference type="GO" id="GO:0006096">
    <property type="term" value="P:glycolytic process"/>
    <property type="evidence" value="ECO:0007669"/>
    <property type="project" value="UniProtKB-UniRule"/>
</dbReference>
<dbReference type="CDD" id="cd16010">
    <property type="entry name" value="iPGM"/>
    <property type="match status" value="1"/>
</dbReference>
<dbReference type="FunFam" id="3.40.1450.10:FF:000002">
    <property type="entry name" value="2,3-bisphosphoglycerate-independent phosphoglycerate mutase"/>
    <property type="match status" value="1"/>
</dbReference>
<dbReference type="Gene3D" id="3.40.720.10">
    <property type="entry name" value="Alkaline Phosphatase, subunit A"/>
    <property type="match status" value="1"/>
</dbReference>
<dbReference type="Gene3D" id="3.40.1450.10">
    <property type="entry name" value="BPG-independent phosphoglycerate mutase, domain B"/>
    <property type="match status" value="1"/>
</dbReference>
<dbReference type="HAMAP" id="MF_01038">
    <property type="entry name" value="GpmI"/>
    <property type="match status" value="1"/>
</dbReference>
<dbReference type="InterPro" id="IPR017850">
    <property type="entry name" value="Alkaline_phosphatase_core_sf"/>
</dbReference>
<dbReference type="InterPro" id="IPR011258">
    <property type="entry name" value="BPG-indep_PGM_N"/>
</dbReference>
<dbReference type="InterPro" id="IPR006124">
    <property type="entry name" value="Metalloenzyme"/>
</dbReference>
<dbReference type="InterPro" id="IPR036646">
    <property type="entry name" value="PGAM_B_sf"/>
</dbReference>
<dbReference type="InterPro" id="IPR005995">
    <property type="entry name" value="Pgm_bpd_ind"/>
</dbReference>
<dbReference type="NCBIfam" id="TIGR01307">
    <property type="entry name" value="pgm_bpd_ind"/>
    <property type="match status" value="1"/>
</dbReference>
<dbReference type="PANTHER" id="PTHR31637">
    <property type="entry name" value="2,3-BISPHOSPHOGLYCERATE-INDEPENDENT PHOSPHOGLYCERATE MUTASE"/>
    <property type="match status" value="1"/>
</dbReference>
<dbReference type="PANTHER" id="PTHR31637:SF0">
    <property type="entry name" value="2,3-BISPHOSPHOGLYCERATE-INDEPENDENT PHOSPHOGLYCERATE MUTASE"/>
    <property type="match status" value="1"/>
</dbReference>
<dbReference type="Pfam" id="PF06415">
    <property type="entry name" value="iPGM_N"/>
    <property type="match status" value="1"/>
</dbReference>
<dbReference type="Pfam" id="PF01676">
    <property type="entry name" value="Metalloenzyme"/>
    <property type="match status" value="1"/>
</dbReference>
<dbReference type="PIRSF" id="PIRSF001492">
    <property type="entry name" value="IPGAM"/>
    <property type="match status" value="1"/>
</dbReference>
<dbReference type="SUPFAM" id="SSF64158">
    <property type="entry name" value="2,3-Bisphosphoglycerate-independent phosphoglycerate mutase, substrate-binding domain"/>
    <property type="match status" value="1"/>
</dbReference>
<dbReference type="SUPFAM" id="SSF53649">
    <property type="entry name" value="Alkaline phosphatase-like"/>
    <property type="match status" value="1"/>
</dbReference>
<comment type="function">
    <text evidence="1">Catalyzes the interconversion of 2-phosphoglycerate and 3-phosphoglycerate.</text>
</comment>
<comment type="catalytic activity">
    <reaction evidence="1">
        <text>(2R)-2-phosphoglycerate = (2R)-3-phosphoglycerate</text>
        <dbReference type="Rhea" id="RHEA:15901"/>
        <dbReference type="ChEBI" id="CHEBI:58272"/>
        <dbReference type="ChEBI" id="CHEBI:58289"/>
        <dbReference type="EC" id="5.4.2.12"/>
    </reaction>
</comment>
<comment type="cofactor">
    <cofactor evidence="1">
        <name>Mn(2+)</name>
        <dbReference type="ChEBI" id="CHEBI:29035"/>
    </cofactor>
    <text evidence="1">Binds 2 manganese ions per subunit.</text>
</comment>
<comment type="pathway">
    <text evidence="1">Carbohydrate degradation; glycolysis; pyruvate from D-glyceraldehyde 3-phosphate: step 3/5.</text>
</comment>
<comment type="subunit">
    <text evidence="1">Monomer.</text>
</comment>
<comment type="similarity">
    <text evidence="1">Belongs to the BPG-independent phosphoglycerate mutase family.</text>
</comment>
<protein>
    <recommendedName>
        <fullName evidence="1">2,3-bisphosphoglycerate-independent phosphoglycerate mutase</fullName>
        <shortName evidence="1">BPG-independent PGAM</shortName>
        <shortName evidence="1">Phosphoglyceromutase</shortName>
        <shortName evidence="1">iPGM</shortName>
        <ecNumber evidence="1">5.4.2.12</ecNumber>
    </recommendedName>
</protein>
<gene>
    <name evidence="1" type="primary">gpmI</name>
    <name type="ordered locus">Hac_1059</name>
</gene>
<feature type="chain" id="PRO_1000063976" description="2,3-bisphosphoglycerate-independent phosphoglycerate mutase">
    <location>
        <begin position="1"/>
        <end position="492"/>
    </location>
</feature>
<feature type="active site" description="Phosphoserine intermediate" evidence="1">
    <location>
        <position position="61"/>
    </location>
</feature>
<feature type="binding site" evidence="1">
    <location>
        <position position="11"/>
    </location>
    <ligand>
        <name>Mn(2+)</name>
        <dbReference type="ChEBI" id="CHEBI:29035"/>
        <label>2</label>
    </ligand>
</feature>
<feature type="binding site" evidence="1">
    <location>
        <position position="61"/>
    </location>
    <ligand>
        <name>Mn(2+)</name>
        <dbReference type="ChEBI" id="CHEBI:29035"/>
        <label>2</label>
    </ligand>
</feature>
<feature type="binding site" evidence="1">
    <location>
        <position position="118"/>
    </location>
    <ligand>
        <name>substrate</name>
    </ligand>
</feature>
<feature type="binding site" evidence="1">
    <location>
        <begin position="147"/>
        <end position="148"/>
    </location>
    <ligand>
        <name>substrate</name>
    </ligand>
</feature>
<feature type="binding site" evidence="1">
    <location>
        <position position="177"/>
    </location>
    <ligand>
        <name>substrate</name>
    </ligand>
</feature>
<feature type="binding site" evidence="1">
    <location>
        <position position="183"/>
    </location>
    <ligand>
        <name>substrate</name>
    </ligand>
</feature>
<feature type="binding site" evidence="1">
    <location>
        <begin position="248"/>
        <end position="251"/>
    </location>
    <ligand>
        <name>substrate</name>
    </ligand>
</feature>
<feature type="binding site" evidence="1">
    <location>
        <position position="321"/>
    </location>
    <ligand>
        <name>substrate</name>
    </ligand>
</feature>
<feature type="binding site" evidence="1">
    <location>
        <position position="387"/>
    </location>
    <ligand>
        <name>Mn(2+)</name>
        <dbReference type="ChEBI" id="CHEBI:29035"/>
        <label>1</label>
    </ligand>
</feature>
<feature type="binding site" evidence="1">
    <location>
        <position position="391"/>
    </location>
    <ligand>
        <name>Mn(2+)</name>
        <dbReference type="ChEBI" id="CHEBI:29035"/>
        <label>1</label>
    </ligand>
</feature>
<feature type="binding site" evidence="1">
    <location>
        <position position="428"/>
    </location>
    <ligand>
        <name>Mn(2+)</name>
        <dbReference type="ChEBI" id="CHEBI:29035"/>
        <label>2</label>
    </ligand>
</feature>
<feature type="binding site" evidence="1">
    <location>
        <position position="429"/>
    </location>
    <ligand>
        <name>Mn(2+)</name>
        <dbReference type="ChEBI" id="CHEBI:29035"/>
        <label>2</label>
    </ligand>
</feature>
<feature type="binding site" evidence="1">
    <location>
        <position position="446"/>
    </location>
    <ligand>
        <name>Mn(2+)</name>
        <dbReference type="ChEBI" id="CHEBI:29035"/>
        <label>1</label>
    </ligand>
</feature>